<comment type="function">
    <text evidence="2">Secreted effector that partially suppresses elicitor-induced cell death in host and enhances virulence of P.parasitica.</text>
</comment>
<comment type="subcellular location">
    <subcellularLocation>
        <location evidence="5">Secreted</location>
    </subcellularLocation>
    <subcellularLocation>
        <location evidence="5">Host cell</location>
    </subcellularLocation>
</comment>
<comment type="induction">
    <text evidence="2">Expression is induced in presence of citrus root extracts or during the interaction with the susceptible host.</text>
</comment>
<comment type="domain">
    <text evidence="5">The RxLR-dEER motif acts to carry the protein into the host cell cytoplasm through binding to cell surface phosphatidylinositol-3-phosphate.</text>
</comment>
<comment type="similarity">
    <text evidence="4">Belongs to the RxLR effector family.</text>
</comment>
<accession>W2P2K7</accession>
<protein>
    <recommendedName>
        <fullName evidence="3">Secreted RxLR effector protein 3</fullName>
    </recommendedName>
</protein>
<proteinExistence type="evidence at transcript level"/>
<sequence length="127" mass="14526">MRPPLLLFLTVTVLVSCASAVSTGNAAELRSLRSIKTTTNDDAAEEERGGFYHKFDLNFLDDIFHGLPEQFQRMRNQPERLRTMFENWKTGWMSVDDAVAYMTREGLSEKAISQFKAAYQAYLKHKG</sequence>
<feature type="signal peptide" evidence="1">
    <location>
        <begin position="1"/>
        <end position="20"/>
    </location>
</feature>
<feature type="chain" id="PRO_5004821246" description="Secreted RxLR effector protein 3">
    <location>
        <begin position="21"/>
        <end position="127"/>
    </location>
</feature>
<feature type="short sequence motif" description="RxLR-dEER" evidence="5">
    <location>
        <begin position="30"/>
        <end position="48"/>
    </location>
</feature>
<name>RXLR3_PHYNI</name>
<keyword id="KW-0964">Secreted</keyword>
<keyword id="KW-0732">Signal</keyword>
<keyword id="KW-0843">Virulence</keyword>
<gene>
    <name evidence="3" type="primary">RxLR3</name>
    <name type="ORF">L914_01796</name>
</gene>
<dbReference type="EMBL" id="KI690869">
    <property type="protein sequence ID" value="ETM54925.1"/>
    <property type="molecule type" value="Genomic_DNA"/>
</dbReference>
<dbReference type="SMR" id="W2P2K7"/>
<dbReference type="EnsemblProtists" id="ETM54925">
    <property type="protein sequence ID" value="ETM54925"/>
    <property type="gene ID" value="L914_01796"/>
</dbReference>
<dbReference type="VEuPathDB" id="FungiDB:PPTG_06988"/>
<dbReference type="Proteomes" id="UP000054532">
    <property type="component" value="Unassembled WGS sequence"/>
</dbReference>
<dbReference type="GO" id="GO:0005576">
    <property type="term" value="C:extracellular region"/>
    <property type="evidence" value="ECO:0007669"/>
    <property type="project" value="UniProtKB-SubCell"/>
</dbReference>
<dbReference type="GO" id="GO:0043657">
    <property type="term" value="C:host cell"/>
    <property type="evidence" value="ECO:0007669"/>
    <property type="project" value="UniProtKB-SubCell"/>
</dbReference>
<evidence type="ECO:0000255" key="1"/>
<evidence type="ECO:0000269" key="2">
    <source>
    </source>
</evidence>
<evidence type="ECO:0000303" key="3">
    <source>
    </source>
</evidence>
<evidence type="ECO:0000305" key="4"/>
<evidence type="ECO:0000305" key="5">
    <source>
    </source>
</evidence>
<reference key="1">
    <citation type="submission" date="2013-11" db="EMBL/GenBank/DDBJ databases">
        <title>The genome sequence of Phytophthora parasitica IAC_01/95.</title>
        <authorList>
            <consortium name="The Broad Institute Genomics Platform"/>
            <person name="Russ C."/>
            <person name="Tyler B."/>
            <person name="Panabieres F."/>
            <person name="Shan W."/>
            <person name="Tripathy S."/>
            <person name="Grunwald N."/>
            <person name="Machado M."/>
            <person name="Johnson C.S."/>
            <person name="Arredondo F."/>
            <person name="Hong C."/>
            <person name="Coffey M."/>
            <person name="Young S.K."/>
            <person name="Zeng Q."/>
            <person name="Gargeya S."/>
            <person name="Fitzgerald M."/>
            <person name="Abouelleil A."/>
            <person name="Alvarado L."/>
            <person name="Chapman S.B."/>
            <person name="Gainer-Dewar J."/>
            <person name="Goldberg J."/>
            <person name="Griggs A."/>
            <person name="Gujja S."/>
            <person name="Hansen M."/>
            <person name="Howarth C."/>
            <person name="Imamovic A."/>
            <person name="Ireland A."/>
            <person name="Larimer J."/>
            <person name="McCowan C."/>
            <person name="Murphy C."/>
            <person name="Pearson M."/>
            <person name="Poon T.W."/>
            <person name="Priest M."/>
            <person name="Roberts A."/>
            <person name="Saif S."/>
            <person name="Shea T."/>
            <person name="Sykes S."/>
            <person name="Wortman J."/>
            <person name="Nusbaum C."/>
            <person name="Birren B."/>
        </authorList>
    </citation>
    <scope>NUCLEOTIDE SEQUENCE [LARGE SCALE GENOMIC DNA]</scope>
    <source>
        <strain>IAC_01/95</strain>
    </source>
</reference>
<reference key="2">
    <citation type="journal article" date="2018" name="Mol. Plant Microbe Interact.">
        <title>Phytophthora parasitica effector PpRxLR2 suppresses Nicotiana benthamiana immunity.</title>
        <authorList>
            <person name="Dalio R.J.D."/>
            <person name="Maximo H.J."/>
            <person name="Oliveira T.S."/>
            <person name="Dias R.O."/>
            <person name="Breton M.C."/>
            <person name="Felizatti H."/>
            <person name="Machado M."/>
        </authorList>
    </citation>
    <scope>INDUCTION</scope>
    <scope>FUNCTION</scope>
</reference>
<organism>
    <name type="scientific">Phytophthora nicotianae</name>
    <name type="common">Potato buckeye rot agent</name>
    <name type="synonym">Phytophthora parasitica</name>
    <dbReference type="NCBI Taxonomy" id="4792"/>
    <lineage>
        <taxon>Eukaryota</taxon>
        <taxon>Sar</taxon>
        <taxon>Stramenopiles</taxon>
        <taxon>Oomycota</taxon>
        <taxon>Peronosporales</taxon>
        <taxon>Peronosporaceae</taxon>
        <taxon>Phytophthora</taxon>
    </lineage>
</organism>